<comment type="function">
    <text evidence="3 4">Essential for respiratory growth and required for maintenance of mtDNA. Required for cell survival in the absence of prohibitins.</text>
</comment>
<comment type="subcellular location">
    <subcellularLocation>
        <location evidence="1 2">Mitochondrion</location>
    </subcellularLocation>
</comment>
<comment type="similarity">
    <text evidence="5">Belongs to the GEP5 family.</text>
</comment>
<gene>
    <name type="primary">GEP5</name>
    <name type="synonym">RRG5</name>
    <name type="ordered locus">YLR091W</name>
</gene>
<feature type="chain" id="PRO_0000247349" description="Genetic interactor of prohibitin 5, mitochondrial">
    <location>
        <begin position="1"/>
        <end position="293"/>
    </location>
</feature>
<proteinExistence type="evidence at protein level"/>
<reference key="1">
    <citation type="journal article" date="1997" name="Nature">
        <title>The nucleotide sequence of Saccharomyces cerevisiae chromosome XII.</title>
        <authorList>
            <person name="Johnston M."/>
            <person name="Hillier L.W."/>
            <person name="Riles L."/>
            <person name="Albermann K."/>
            <person name="Andre B."/>
            <person name="Ansorge W."/>
            <person name="Benes V."/>
            <person name="Brueckner M."/>
            <person name="Delius H."/>
            <person name="Dubois E."/>
            <person name="Duesterhoeft A."/>
            <person name="Entian K.-D."/>
            <person name="Floeth M."/>
            <person name="Goffeau A."/>
            <person name="Hebling U."/>
            <person name="Heumann K."/>
            <person name="Heuss-Neitzel D."/>
            <person name="Hilbert H."/>
            <person name="Hilger F."/>
            <person name="Kleine K."/>
            <person name="Koetter P."/>
            <person name="Louis E.J."/>
            <person name="Messenguy F."/>
            <person name="Mewes H.-W."/>
            <person name="Miosga T."/>
            <person name="Moestl D."/>
            <person name="Mueller-Auer S."/>
            <person name="Nentwich U."/>
            <person name="Obermaier B."/>
            <person name="Piravandi E."/>
            <person name="Pohl T.M."/>
            <person name="Portetelle D."/>
            <person name="Purnelle B."/>
            <person name="Rechmann S."/>
            <person name="Rieger M."/>
            <person name="Rinke M."/>
            <person name="Rose M."/>
            <person name="Scharfe M."/>
            <person name="Scherens B."/>
            <person name="Scholler P."/>
            <person name="Schwager C."/>
            <person name="Schwarz S."/>
            <person name="Underwood A.P."/>
            <person name="Urrestarazu L.A."/>
            <person name="Vandenbol M."/>
            <person name="Verhasselt P."/>
            <person name="Vierendeels F."/>
            <person name="Voet M."/>
            <person name="Volckaert G."/>
            <person name="Voss H."/>
            <person name="Wambutt R."/>
            <person name="Wedler E."/>
            <person name="Wedler H."/>
            <person name="Zimmermann F.K."/>
            <person name="Zollner A."/>
            <person name="Hani J."/>
            <person name="Hoheisel J.D."/>
        </authorList>
    </citation>
    <scope>NUCLEOTIDE SEQUENCE [LARGE SCALE GENOMIC DNA]</scope>
    <source>
        <strain>ATCC 204508 / S288c</strain>
    </source>
</reference>
<reference key="2">
    <citation type="journal article" date="2014" name="G3 (Bethesda)">
        <title>The reference genome sequence of Saccharomyces cerevisiae: Then and now.</title>
        <authorList>
            <person name="Engel S.R."/>
            <person name="Dietrich F.S."/>
            <person name="Fisk D.G."/>
            <person name="Binkley G."/>
            <person name="Balakrishnan R."/>
            <person name="Costanzo M.C."/>
            <person name="Dwight S.S."/>
            <person name="Hitz B.C."/>
            <person name="Karra K."/>
            <person name="Nash R.S."/>
            <person name="Weng S."/>
            <person name="Wong E.D."/>
            <person name="Lloyd P."/>
            <person name="Skrzypek M.S."/>
            <person name="Miyasato S.R."/>
            <person name="Simison M."/>
            <person name="Cherry J.M."/>
        </authorList>
    </citation>
    <scope>GENOME REANNOTATION</scope>
    <source>
        <strain>ATCC 204508 / S288c</strain>
    </source>
</reference>
<reference key="3">
    <citation type="journal article" date="2007" name="Genome Res.">
        <title>Approaching a complete repository of sequence-verified protein-encoding clones for Saccharomyces cerevisiae.</title>
        <authorList>
            <person name="Hu Y."/>
            <person name="Rolfs A."/>
            <person name="Bhullar B."/>
            <person name="Murthy T.V.S."/>
            <person name="Zhu C."/>
            <person name="Berger M.F."/>
            <person name="Camargo A.A."/>
            <person name="Kelley F."/>
            <person name="McCarron S."/>
            <person name="Jepson D."/>
            <person name="Richardson A."/>
            <person name="Raphael J."/>
            <person name="Moreira D."/>
            <person name="Taycher E."/>
            <person name="Zuo D."/>
            <person name="Mohr S."/>
            <person name="Kane M.F."/>
            <person name="Williamson J."/>
            <person name="Simpson A.J.G."/>
            <person name="Bulyk M.L."/>
            <person name="Harlow E."/>
            <person name="Marsischky G."/>
            <person name="Kolodner R.D."/>
            <person name="LaBaer J."/>
        </authorList>
    </citation>
    <scope>NUCLEOTIDE SEQUENCE [GENOMIC DNA]</scope>
    <source>
        <strain>ATCC 204508 / S288c</strain>
    </source>
</reference>
<reference key="4">
    <citation type="journal article" date="2003" name="Nature">
        <title>Global analysis of protein localization in budding yeast.</title>
        <authorList>
            <person name="Huh W.-K."/>
            <person name="Falvo J.V."/>
            <person name="Gerke L.C."/>
            <person name="Carroll A.S."/>
            <person name="Howson R.W."/>
            <person name="Weissman J.S."/>
            <person name="O'Shea E.K."/>
        </authorList>
    </citation>
    <scope>SUBCELLULAR LOCATION [LARGE SCALE ANALYSIS]</scope>
</reference>
<reference key="5">
    <citation type="journal article" date="2003" name="Proc. Natl. Acad. Sci. U.S.A.">
        <title>The proteome of Saccharomyces cerevisiae mitochondria.</title>
        <authorList>
            <person name="Sickmann A."/>
            <person name="Reinders J."/>
            <person name="Wagner Y."/>
            <person name="Joppich C."/>
            <person name="Zahedi R.P."/>
            <person name="Meyer H.E."/>
            <person name="Schoenfisch B."/>
            <person name="Perschil I."/>
            <person name="Chacinska A."/>
            <person name="Guiard B."/>
            <person name="Rehling P."/>
            <person name="Pfanner N."/>
            <person name="Meisinger C."/>
        </authorList>
    </citation>
    <scope>SUBCELLULAR LOCATION [LARGE SCALE ANALYSIS]</scope>
    <source>
        <strain>ATCC 76625 / YPH499</strain>
    </source>
</reference>
<reference key="6">
    <citation type="journal article" date="2009" name="Genome Biol.">
        <title>Genome-wide deletion mutant analysis reveals genes required for respiratory growth, mitochondrial genome maintenance and mitochondrial protein synthesis in Saccharomyces cerevisiae.</title>
        <authorList>
            <person name="Merz S."/>
            <person name="Westermann B."/>
        </authorList>
    </citation>
    <scope>FUNCTION</scope>
</reference>
<reference key="7">
    <citation type="journal article" date="2009" name="J. Cell Biol.">
        <title>The genetic interactome of prohibitins: coordinated control of cardiolipin and phosphatidylethanolamine by conserved regulators in mitochondria.</title>
        <authorList>
            <person name="Osman C."/>
            <person name="Haag M."/>
            <person name="Potting C."/>
            <person name="Rodenfels J."/>
            <person name="Dip P.V."/>
            <person name="Wieland F.T."/>
            <person name="Brugger B."/>
            <person name="Westermann B."/>
            <person name="Langer T."/>
        </authorList>
    </citation>
    <scope>FUNCTION</scope>
</reference>
<dbReference type="EMBL" id="U53880">
    <property type="protein sequence ID" value="AAB67595.1"/>
    <property type="molecule type" value="Genomic_DNA"/>
</dbReference>
<dbReference type="EMBL" id="Z73263">
    <property type="protein sequence ID" value="CAA97652.1"/>
    <property type="molecule type" value="Genomic_DNA"/>
</dbReference>
<dbReference type="EMBL" id="AY692636">
    <property type="protein sequence ID" value="AAT92655.1"/>
    <property type="molecule type" value="Genomic_DNA"/>
</dbReference>
<dbReference type="EMBL" id="BK006945">
    <property type="protein sequence ID" value="DAA09407.1"/>
    <property type="molecule type" value="Genomic_DNA"/>
</dbReference>
<dbReference type="PIR" id="S64925">
    <property type="entry name" value="S64925"/>
</dbReference>
<dbReference type="RefSeq" id="NP_013192.1">
    <property type="nucleotide sequence ID" value="NM_001181978.1"/>
</dbReference>
<dbReference type="BioGRID" id="31364">
    <property type="interactions" value="168"/>
</dbReference>
<dbReference type="FunCoup" id="Q12393">
    <property type="interactions" value="41"/>
</dbReference>
<dbReference type="IntAct" id="Q12393">
    <property type="interactions" value="7"/>
</dbReference>
<dbReference type="MINT" id="Q12393"/>
<dbReference type="STRING" id="4932.YLR091W"/>
<dbReference type="PaxDb" id="4932-YLR091W"/>
<dbReference type="PeptideAtlas" id="Q12393"/>
<dbReference type="EnsemblFungi" id="YLR091W_mRNA">
    <property type="protein sequence ID" value="YLR091W"/>
    <property type="gene ID" value="YLR091W"/>
</dbReference>
<dbReference type="GeneID" id="850780"/>
<dbReference type="KEGG" id="sce:YLR091W"/>
<dbReference type="AGR" id="SGD:S000004081"/>
<dbReference type="SGD" id="S000004081">
    <property type="gene designation" value="GEP5"/>
</dbReference>
<dbReference type="VEuPathDB" id="FungiDB:YLR091W"/>
<dbReference type="eggNOG" id="ENOG502S2Q8">
    <property type="taxonomic scope" value="Eukaryota"/>
</dbReference>
<dbReference type="HOGENOM" id="CLU_079415_0_0_1"/>
<dbReference type="InParanoid" id="Q12393"/>
<dbReference type="OMA" id="FWPYERH"/>
<dbReference type="OrthoDB" id="4066262at2759"/>
<dbReference type="BioCyc" id="YEAST:G3O-32241-MONOMER"/>
<dbReference type="BioGRID-ORCS" id="850780">
    <property type="hits" value="6 hits in 10 CRISPR screens"/>
</dbReference>
<dbReference type="PRO" id="PR:Q12393"/>
<dbReference type="Proteomes" id="UP000002311">
    <property type="component" value="Chromosome XII"/>
</dbReference>
<dbReference type="RNAct" id="Q12393">
    <property type="molecule type" value="protein"/>
</dbReference>
<dbReference type="GO" id="GO:0099617">
    <property type="term" value="C:matrix side of mitochondrial inner membrane"/>
    <property type="evidence" value="ECO:0000314"/>
    <property type="project" value="SGD"/>
</dbReference>
<dbReference type="GO" id="GO:0005739">
    <property type="term" value="C:mitochondrion"/>
    <property type="evidence" value="ECO:0007005"/>
    <property type="project" value="SGD"/>
</dbReference>
<dbReference type="GO" id="GO:0000002">
    <property type="term" value="P:mitochondrial genome maintenance"/>
    <property type="evidence" value="ECO:0000315"/>
    <property type="project" value="SGD"/>
</dbReference>
<dbReference type="GO" id="GO:0097745">
    <property type="term" value="P:mitochondrial tRNA 5'-end processing"/>
    <property type="evidence" value="ECO:0000315"/>
    <property type="project" value="SGD"/>
</dbReference>
<dbReference type="InterPro" id="IPR031455">
    <property type="entry name" value="Gep5"/>
</dbReference>
<dbReference type="Pfam" id="PF17053">
    <property type="entry name" value="GEP5"/>
    <property type="match status" value="1"/>
</dbReference>
<protein>
    <recommendedName>
        <fullName>Genetic interactor of prohibitin 5, mitochondrial</fullName>
    </recommendedName>
    <alternativeName>
        <fullName>Required for respiratory growth protein 5</fullName>
    </alternativeName>
</protein>
<accession>Q12393</accession>
<accession>D6VY91</accession>
<name>GEP5_YEAST</name>
<keyword id="KW-0496">Mitochondrion</keyword>
<keyword id="KW-1185">Reference proteome</keyword>
<evidence type="ECO:0000269" key="1">
    <source>
    </source>
</evidence>
<evidence type="ECO:0000269" key="2">
    <source>
    </source>
</evidence>
<evidence type="ECO:0000269" key="3">
    <source>
    </source>
</evidence>
<evidence type="ECO:0000269" key="4">
    <source>
    </source>
</evidence>
<evidence type="ECO:0000305" key="5"/>
<sequence length="293" mass="33868">MASQVNALLLPVIESTPLHQITKVALTTTLTSKQSDYKFKEIAVPLTKSLQLYEKAQRRQDLRASLKALESIIYQTHFQWNNPLPRHAHLFQKHYHFLLTHWPFENHRDLVDSIAVNNGKLNSTSSRSVWLKADWITLFNVKNPWVQTPPSLMRLSGTDLDTFTPERIFLINSLGNHYKFLIANSHLSYNHKKYPSPGVQIPVRNALGEVSPAKQIAQLFARQLSHIYKSLFIENPPLSPENELALTAVFYDETVERRLRRLYMRACARAYTTTNADSTTEPLMFHCTRWEVD</sequence>
<organism>
    <name type="scientific">Saccharomyces cerevisiae (strain ATCC 204508 / S288c)</name>
    <name type="common">Baker's yeast</name>
    <dbReference type="NCBI Taxonomy" id="559292"/>
    <lineage>
        <taxon>Eukaryota</taxon>
        <taxon>Fungi</taxon>
        <taxon>Dikarya</taxon>
        <taxon>Ascomycota</taxon>
        <taxon>Saccharomycotina</taxon>
        <taxon>Saccharomycetes</taxon>
        <taxon>Saccharomycetales</taxon>
        <taxon>Saccharomycetaceae</taxon>
        <taxon>Saccharomyces</taxon>
    </lineage>
</organism>